<organism>
    <name type="scientific">Homo sapiens</name>
    <name type="common">Human</name>
    <dbReference type="NCBI Taxonomy" id="9606"/>
    <lineage>
        <taxon>Eukaryota</taxon>
        <taxon>Metazoa</taxon>
        <taxon>Chordata</taxon>
        <taxon>Craniata</taxon>
        <taxon>Vertebrata</taxon>
        <taxon>Euteleostomi</taxon>
        <taxon>Mammalia</taxon>
        <taxon>Eutheria</taxon>
        <taxon>Euarchontoglires</taxon>
        <taxon>Primates</taxon>
        <taxon>Haplorrhini</taxon>
        <taxon>Catarrhini</taxon>
        <taxon>Hominidae</taxon>
        <taxon>Homo</taxon>
    </lineage>
</organism>
<feature type="chain" id="PRO_0000047026" description="Sal-like protein 4">
    <location>
        <begin position="1"/>
        <end position="1053"/>
    </location>
</feature>
<feature type="zinc finger region" description="C2H2-type 1; atypical" evidence="2 12">
    <location>
        <begin position="72"/>
        <end position="94"/>
    </location>
</feature>
<feature type="zinc finger region" description="C2H2-type 2" evidence="2">
    <location>
        <begin position="382"/>
        <end position="404"/>
    </location>
</feature>
<feature type="zinc finger region" description="C2H2-type 3" evidence="2">
    <location>
        <begin position="410"/>
        <end position="432"/>
    </location>
</feature>
<feature type="zinc finger region" description="C2H2-type 4" evidence="2">
    <location>
        <begin position="566"/>
        <end position="588"/>
    </location>
</feature>
<feature type="zinc finger region" description="C2H2-type 5" evidence="2">
    <location>
        <begin position="594"/>
        <end position="616"/>
    </location>
</feature>
<feature type="zinc finger region" description="C2H2-type 6" evidence="2">
    <location>
        <begin position="626"/>
        <end position="648"/>
    </location>
</feature>
<feature type="zinc finger region" description="C2H2-type 7" evidence="2">
    <location>
        <begin position="870"/>
        <end position="892"/>
    </location>
</feature>
<feature type="zinc finger region" description="C2H2-type 8" evidence="2">
    <location>
        <begin position="898"/>
        <end position="920"/>
    </location>
</feature>
<feature type="region of interest" description="Disordered" evidence="3">
    <location>
        <begin position="1"/>
        <end position="62"/>
    </location>
</feature>
<feature type="region of interest" description="Disordered" evidence="3">
    <location>
        <begin position="116"/>
        <end position="149"/>
    </location>
</feature>
<feature type="region of interest" description="Disordered" evidence="3">
    <location>
        <begin position="483"/>
        <end position="546"/>
    </location>
</feature>
<feature type="region of interest" description="Disordered" evidence="3">
    <location>
        <begin position="694"/>
        <end position="714"/>
    </location>
</feature>
<feature type="region of interest" description="Disordered" evidence="3">
    <location>
        <begin position="736"/>
        <end position="776"/>
    </location>
</feature>
<feature type="region of interest" description="Disordered" evidence="3">
    <location>
        <begin position="788"/>
        <end position="828"/>
    </location>
</feature>
<feature type="region of interest" description="Disordered" evidence="3">
    <location>
        <begin position="1018"/>
        <end position="1039"/>
    </location>
</feature>
<feature type="compositionally biased region" description="Low complexity" evidence="3">
    <location>
        <begin position="20"/>
        <end position="46"/>
    </location>
</feature>
<feature type="compositionally biased region" description="Basic and acidic residues" evidence="3">
    <location>
        <begin position="130"/>
        <end position="149"/>
    </location>
</feature>
<feature type="compositionally biased region" description="Polar residues" evidence="3">
    <location>
        <begin position="483"/>
        <end position="496"/>
    </location>
</feature>
<feature type="compositionally biased region" description="Low complexity" evidence="3">
    <location>
        <begin position="698"/>
        <end position="708"/>
    </location>
</feature>
<feature type="compositionally biased region" description="Polar residues" evidence="3">
    <location>
        <begin position="743"/>
        <end position="776"/>
    </location>
</feature>
<feature type="compositionally biased region" description="Polar residues" evidence="3">
    <location>
        <begin position="788"/>
        <end position="797"/>
    </location>
</feature>
<feature type="compositionally biased region" description="Basic and acidic residues" evidence="3">
    <location>
        <begin position="810"/>
        <end position="821"/>
    </location>
</feature>
<feature type="modified residue" description="Phosphoserine" evidence="11">
    <location>
        <position position="57"/>
    </location>
</feature>
<feature type="modified residue" description="Phosphoserine" evidence="15">
    <location>
        <position position="307"/>
    </location>
</feature>
<feature type="modified residue" description="Phosphothreonine" evidence="15">
    <location>
        <position position="541"/>
    </location>
</feature>
<feature type="modified residue" description="Phosphoserine" evidence="15">
    <location>
        <position position="776"/>
    </location>
</feature>
<feature type="modified residue" description="Phosphoserine" evidence="15">
    <location>
        <position position="789"/>
    </location>
</feature>
<feature type="modified residue" description="Phosphoserine" evidence="11">
    <location>
        <position position="852"/>
    </location>
</feature>
<feature type="modified residue" description="Phosphoserine" evidence="15">
    <location>
        <position position="1019"/>
    </location>
</feature>
<feature type="cross-link" description="Glycyl lysine isopeptide (Lys-Gly) (interchain with G-Cter in SUMO1); alternate">
    <location>
        <position position="156"/>
    </location>
</feature>
<feature type="cross-link" description="Glycyl lysine isopeptide (Lys-Gly) (interchain with G-Cter in SUMO2); alternate" evidence="17">
    <location>
        <position position="156"/>
    </location>
</feature>
<feature type="cross-link" description="Glycyl lysine isopeptide (Lys-Gly) (interchain with G-Cter in SUMO2)" evidence="17">
    <location>
        <position position="175"/>
    </location>
</feature>
<feature type="cross-link" description="Glycyl lysine isopeptide (Lys-Gly) (interchain with G-Cter in SUMO2)" evidence="17">
    <location>
        <position position="190"/>
    </location>
</feature>
<feature type="cross-link" description="Glycyl lysine isopeptide (Lys-Gly) (interchain with G-Cter in SUMO2)" evidence="17">
    <location>
        <position position="290"/>
    </location>
</feature>
<feature type="cross-link" description="Glycyl lysine isopeptide (Lys-Gly) (interchain with G-Cter in SUMO1); alternate">
    <location>
        <position position="316"/>
    </location>
</feature>
<feature type="cross-link" description="Glycyl lysine isopeptide (Lys-Gly) (interchain with G-Cter in SUMO2); alternate" evidence="16 17">
    <location>
        <position position="316"/>
    </location>
</feature>
<feature type="cross-link" description="Glycyl lysine isopeptide (Lys-Gly) (interchain with G-Cter in SUMO2)" evidence="17">
    <location>
        <position position="372"/>
    </location>
</feature>
<feature type="cross-link" description="Glycyl lysine isopeptide (Lys-Gly) (interchain with G-Cter in SUMO1); alternate">
    <location>
        <position position="374"/>
    </location>
</feature>
<feature type="cross-link" description="Glycyl lysine isopeptide (Lys-Gly) (interchain with G-Cter in SUMO2); alternate" evidence="17">
    <location>
        <position position="374"/>
    </location>
</feature>
<feature type="cross-link" description="Glycyl lysine isopeptide (Lys-Gly) (interchain with G-Cter in SUMO2)" evidence="17">
    <location>
        <position position="436"/>
    </location>
</feature>
<feature type="cross-link" description="Glycyl lysine isopeptide (Lys-Gly) (interchain with G-Cter in SUMO2)" evidence="17">
    <location>
        <position position="550"/>
    </location>
</feature>
<feature type="cross-link" description="Glycyl lysine isopeptide (Lys-Gly) (interchain with G-Cter in SUMO2)" evidence="17">
    <location>
        <position position="597"/>
    </location>
</feature>
<feature type="cross-link" description="Glycyl lysine isopeptide (Lys-Gly) (interchain with G-Cter in SUMO2)" evidence="17">
    <location>
        <position position="623"/>
    </location>
</feature>
<feature type="cross-link" description="Glycyl lysine isopeptide (Lys-Gly) (interchain with G-Cter in SUMO1); alternate">
    <location>
        <position position="838"/>
    </location>
</feature>
<feature type="cross-link" description="Glycyl lysine isopeptide (Lys-Gly) (interchain with G-Cter in SUMO2); alternate" evidence="16 17">
    <location>
        <position position="838"/>
    </location>
</feature>
<feature type="cross-link" description="Glycyl lysine isopeptide (Lys-Gly) (interchain with G-Cter in SUMO2)" evidence="17">
    <location>
        <position position="896"/>
    </location>
</feature>
<feature type="cross-link" description="Glycyl lysine isopeptide (Lys-Gly) (interchain with G-Cter in SUMO2)" evidence="17">
    <location>
        <position position="932"/>
    </location>
</feature>
<feature type="cross-link" description="Glycyl lysine isopeptide (Lys-Gly) (interchain with G-Cter in SUMO2)" evidence="17">
    <location>
        <position position="947"/>
    </location>
</feature>
<feature type="splice variant" id="VSP_046525" description="In isoform SALL4B." evidence="13">
    <location>
        <begin position="385"/>
        <end position="821"/>
    </location>
</feature>
<feature type="sequence variant" id="VAR_016042" description="In dbSNP:rs6126344." evidence="5">
    <original>L</original>
    <variation>R</variation>
    <location>
        <position position="507"/>
    </location>
</feature>
<feature type="sequence variant" id="VAR_016043" description="In dbSNP:rs6091375." evidence="5">
    <original>I</original>
    <variation>L</variation>
    <location>
        <position position="798"/>
    </location>
</feature>
<feature type="sequence variant" id="VAR_033054" description="In DRRS; dbSNP:rs74315429." evidence="6">
    <original>H</original>
    <variation>R</variation>
    <location>
        <position position="888"/>
    </location>
</feature>
<feature type="sequence conflict" description="In Ref. 1; AAO16566." evidence="14" ref="1">
    <original>K</original>
    <variation>E</variation>
    <location>
        <position position="130"/>
    </location>
</feature>
<feature type="sequence conflict" description="In Ref. 1; AAO16566." evidence="14" ref="1">
    <original>M</original>
    <variation>I</variation>
    <location>
        <position position="143"/>
    </location>
</feature>
<feature type="sequence conflict" description="In Ref. 1; AAO16566." evidence="14" ref="1">
    <original>R</original>
    <variation>G</variation>
    <location>
        <position position="865"/>
    </location>
</feature>
<feature type="strand" evidence="18">
    <location>
        <begin position="3"/>
        <end position="5"/>
    </location>
</feature>
<feature type="turn" evidence="21">
    <location>
        <begin position="385"/>
        <end position="387"/>
    </location>
</feature>
<feature type="strand" evidence="23">
    <location>
        <begin position="390"/>
        <end position="393"/>
    </location>
</feature>
<feature type="helix" evidence="21">
    <location>
        <begin position="394"/>
        <end position="405"/>
    </location>
</feature>
<feature type="strand" evidence="23">
    <location>
        <begin position="406"/>
        <end position="408"/>
    </location>
</feature>
<feature type="turn" evidence="19">
    <location>
        <begin position="413"/>
        <end position="415"/>
    </location>
</feature>
<feature type="strand" evidence="19">
    <location>
        <begin position="418"/>
        <end position="421"/>
    </location>
</feature>
<feature type="helix" evidence="19">
    <location>
        <begin position="422"/>
        <end position="430"/>
    </location>
</feature>
<feature type="helix" evidence="21">
    <location>
        <begin position="439"/>
        <end position="442"/>
    </location>
</feature>
<feature type="turn" evidence="21">
    <location>
        <begin position="443"/>
        <end position="445"/>
    </location>
</feature>
<feature type="helix" evidence="21">
    <location>
        <begin position="446"/>
        <end position="448"/>
    </location>
</feature>
<feature type="turn" evidence="22">
    <location>
        <begin position="873"/>
        <end position="875"/>
    </location>
</feature>
<feature type="strand" evidence="22">
    <location>
        <begin position="878"/>
        <end position="881"/>
    </location>
</feature>
<feature type="helix" evidence="22">
    <location>
        <begin position="882"/>
        <end position="893"/>
    </location>
</feature>
<feature type="turn" evidence="22">
    <location>
        <begin position="901"/>
        <end position="903"/>
    </location>
</feature>
<feature type="strand" evidence="22">
    <location>
        <begin position="906"/>
        <end position="909"/>
    </location>
</feature>
<feature type="helix" evidence="22">
    <location>
        <begin position="910"/>
        <end position="917"/>
    </location>
</feature>
<feature type="turn" evidence="20">
    <location>
        <begin position="918"/>
        <end position="920"/>
    </location>
</feature>
<sequence>MSRRKQAKPQHINSEEDQGEQQPQQQTPEFADAAPAAPAAGELGAPVNHPGNDEVASEDEATVKRLRREETHVCEKCCAEFFSISEFLEHKKNCTKNPPVLIMNDSEGPVPSEDFSGAVLSHQPTSPGSKDCHRENGGSSEDMKEKPDAESVVYLKTETALPPTPQDISYLAKGKVANTNVTLQALRGTKVAVNQRSADALPAPVPGANSIPWVLEQILCLQQQQLQQIQLTEQIRIQVNMWASHALHSSGAGADTLKTLGSHMSQQVSAAVALLSQKAGSQGLSLDALKQAKLPHANIPSATSSLSPGLAPFTLKPDGTRVLPNVMSRLPSALLPQAPGSVLFQSPFSTVALDTSKKGKGKPPNISAVDVKPKDEAALYKHKCKYCSKVFGTDSSLQIHLRSHTGERPFVCSVCGHRFTTKGNLKVHFHRHPQVKANPQLFAEFQDKVAAGNGIPYALSVPDPIDEPSLSLDSKPVLVTTSVGLPQNLSSGTNPKDLTGGSLPGDLQPGPSPESEGGPTLPGVGPNYNSPRAGGFQGSGTPEPGSETLKLQQLVENIDKATTDPNECLICHRVLSCQSSLKMHYRTHTGERPFQCKICGRAFSTKGNLKTHLGVHRTNTSIKTQHSCPICQKKFTNAVMLQQHIRMHMGGQIPNTPLPENPCDFTGSEPMTVGENGSTGAICHDDVIESIDVEEVSSQEAPSSSSKVPTPLPSIHSASPTLGFAMMASLDAPGKVGPAPFNLQRQGSRENGSVESDGLTNDSSSLMGDQEYQSRSPDILETTSFQALSPANSQAESIKSKSPDAGSKAESSENSRTEMEGRSSLPSTFIRAPPTYVKVEVPGTFVGPSTLSPGMTPLLAAQPRRQAKQHGCTRCGKNFSSASALQIHERTHTGEKPFVCNICGRAFTTKGNLKVHYMTHGANNNSARRGRKLAIENTMALLGTDGKRVSEIFPKEILAPSVNVDPVVWNQYTSMLNGGLAVKTNEISVIQSGGVPTLPVSLGATSVVNNATVSKMDGSQSGISADVEKPSATDGVPKHQFPHFLEENKIAVS</sequence>
<keyword id="KW-0002">3D-structure</keyword>
<keyword id="KW-0025">Alternative splicing</keyword>
<keyword id="KW-0963">Cytoplasm</keyword>
<keyword id="KW-0209">Deafness</keyword>
<keyword id="KW-0225">Disease variant</keyword>
<keyword id="KW-0238">DNA-binding</keyword>
<keyword id="KW-1017">Isopeptide bond</keyword>
<keyword id="KW-0479">Metal-binding</keyword>
<keyword id="KW-0539">Nucleus</keyword>
<keyword id="KW-0553">Oncogene</keyword>
<keyword id="KW-0597">Phosphoprotein</keyword>
<keyword id="KW-1267">Proteomics identification</keyword>
<keyword id="KW-1185">Reference proteome</keyword>
<keyword id="KW-0677">Repeat</keyword>
<keyword id="KW-0804">Transcription</keyword>
<keyword id="KW-0805">Transcription regulation</keyword>
<keyword id="KW-0832">Ubl conjugation</keyword>
<keyword id="KW-0862">Zinc</keyword>
<keyword id="KW-0863">Zinc-finger</keyword>
<proteinExistence type="evidence at protein level"/>
<comment type="function">
    <text evidence="11">Transcription factor with a key role in the maintenance and self-renewal of embryonic and hematopoietic stem cells.</text>
</comment>
<comment type="subunit">
    <text evidence="1 9 10 11">Interacts with POU5F1/OCT4 (PubMed:23012367). Interacts with NANOG (By similarity). Interacts with BEND3 (PubMed:21914818). Interacts with NSD2 (via PHD-type zinc fingers 1, 2 and 3) (By similarity). Interacts with NRBP1 (PubMed:22510880).</text>
</comment>
<comment type="subcellular location">
    <subcellularLocation>
        <location>Cytoplasm</location>
    </subcellularLocation>
    <subcellularLocation>
        <location>Nucleus</location>
    </subcellularLocation>
</comment>
<comment type="alternative products">
    <event type="alternative splicing"/>
    <isoform>
        <id>Q9UJQ4-1</id>
        <name>SALL4A</name>
        <sequence type="displayed"/>
    </isoform>
    <isoform>
        <id>Q9UJQ4-2</id>
        <name>SALL4B</name>
        <sequence type="described" ref="VSP_046525"/>
    </isoform>
</comment>
<comment type="tissue specificity">
    <text evidence="7">Expressed in testis. Constitutively expressed in acute myeloid leukemia (AML).</text>
</comment>
<comment type="PTM">
    <text evidence="11">Isoform SALL4B exists primarily as a ubiquitinated form.</text>
</comment>
<comment type="PTM">
    <text evidence="11">Sumoylation with both SUMO1 and SUMO2 regulates the stability, subcellular localization, transcriptional activity, and may reduce interaction with POU5F1/OCT4.</text>
</comment>
<comment type="disease" evidence="4 5 6">
    <disease id="DI-01507">
        <name>Duane-radial ray syndrome</name>
        <acronym>DRRS</acronym>
        <description>Disorder characterized by the association of forearm malformations with Duane retraction syndrome.</description>
        <dbReference type="MIM" id="607323"/>
    </disease>
    <text>The disease is caused by variants affecting the gene represented in this entry.</text>
</comment>
<comment type="disease" evidence="8">
    <disease id="DI-01846">
        <name>IVIC syndrome</name>
        <acronym>IVIC</acronym>
        <description>An autosomal dominant condition characterized by upper limbs anomalies (radial ray defects, carpal bones fusion), extraocular motor disturbances, congenital bilateral non-progressive mixed hearing loss. Other less consistent malformations include heart involvement, mild thrombocytopenia and leukocytosis (before age 50), shoulder girdle hypoplasia, imperforate anus, kidney malrotation or rectovaginal fistula. The IVIC syndrome is an allelic disorder of Duane-radial ray syndrome with a similar phenotype.</description>
        <dbReference type="MIM" id="147750"/>
    </disease>
    <text>The disease is caused by variants affecting the gene represented in this entry.</text>
</comment>
<comment type="similarity">
    <text evidence="14">Belongs to the sal C2H2-type zinc-finger protein family.</text>
</comment>
<accession>Q9UJQ4</accession>
<accession>A2A2D8</accession>
<accession>Q540H3</accession>
<accession>Q6Y8G6</accession>
<reference key="1">
    <citation type="journal article" date="2006" name="Blood">
        <title>SALL4, a novel oncogene, is constitutively expressed in human acute myeloid leukemia (AML) and induces AML in transgenic mice.</title>
        <authorList>
            <person name="Ma Y."/>
            <person name="Cui W."/>
            <person name="Yang J."/>
            <person name="Qu J."/>
            <person name="Di C."/>
            <person name="Amin H.M."/>
            <person name="Lai R."/>
            <person name="Ritz J."/>
            <person name="Krause D.S."/>
            <person name="Chai L."/>
        </authorList>
    </citation>
    <scope>NUCLEOTIDE SEQUENCE [MRNA] (ISOFORMS SALL4A AND SALL4B)</scope>
    <scope>ALTERNATIVE SPLICING</scope>
    <scope>TISSUE SPECIFICITY</scope>
</reference>
<reference key="2">
    <citation type="journal article" date="2001" name="Nature">
        <title>The DNA sequence and comparative analysis of human chromosome 20.</title>
        <authorList>
            <person name="Deloukas P."/>
            <person name="Matthews L.H."/>
            <person name="Ashurst J.L."/>
            <person name="Burton J."/>
            <person name="Gilbert J.G.R."/>
            <person name="Jones M."/>
            <person name="Stavrides G."/>
            <person name="Almeida J.P."/>
            <person name="Babbage A.K."/>
            <person name="Bagguley C.L."/>
            <person name="Bailey J."/>
            <person name="Barlow K.F."/>
            <person name="Bates K.N."/>
            <person name="Beard L.M."/>
            <person name="Beare D.M."/>
            <person name="Beasley O.P."/>
            <person name="Bird C.P."/>
            <person name="Blakey S.E."/>
            <person name="Bridgeman A.M."/>
            <person name="Brown A.J."/>
            <person name="Buck D."/>
            <person name="Burrill W.D."/>
            <person name="Butler A.P."/>
            <person name="Carder C."/>
            <person name="Carter N.P."/>
            <person name="Chapman J.C."/>
            <person name="Clamp M."/>
            <person name="Clark G."/>
            <person name="Clark L.N."/>
            <person name="Clark S.Y."/>
            <person name="Clee C.M."/>
            <person name="Clegg S."/>
            <person name="Cobley V.E."/>
            <person name="Collier R.E."/>
            <person name="Connor R.E."/>
            <person name="Corby N.R."/>
            <person name="Coulson A."/>
            <person name="Coville G.J."/>
            <person name="Deadman R."/>
            <person name="Dhami P.D."/>
            <person name="Dunn M."/>
            <person name="Ellington A.G."/>
            <person name="Frankland J.A."/>
            <person name="Fraser A."/>
            <person name="French L."/>
            <person name="Garner P."/>
            <person name="Grafham D.V."/>
            <person name="Griffiths C."/>
            <person name="Griffiths M.N.D."/>
            <person name="Gwilliam R."/>
            <person name="Hall R.E."/>
            <person name="Hammond S."/>
            <person name="Harley J.L."/>
            <person name="Heath P.D."/>
            <person name="Ho S."/>
            <person name="Holden J.L."/>
            <person name="Howden P.J."/>
            <person name="Huckle E."/>
            <person name="Hunt A.R."/>
            <person name="Hunt S.E."/>
            <person name="Jekosch K."/>
            <person name="Johnson C.M."/>
            <person name="Johnson D."/>
            <person name="Kay M.P."/>
            <person name="Kimberley A.M."/>
            <person name="King A."/>
            <person name="Knights A."/>
            <person name="Laird G.K."/>
            <person name="Lawlor S."/>
            <person name="Lehvaeslaiho M.H."/>
            <person name="Leversha M.A."/>
            <person name="Lloyd C."/>
            <person name="Lloyd D.M."/>
            <person name="Lovell J.D."/>
            <person name="Marsh V.L."/>
            <person name="Martin S.L."/>
            <person name="McConnachie L.J."/>
            <person name="McLay K."/>
            <person name="McMurray A.A."/>
            <person name="Milne S.A."/>
            <person name="Mistry D."/>
            <person name="Moore M.J.F."/>
            <person name="Mullikin J.C."/>
            <person name="Nickerson T."/>
            <person name="Oliver K."/>
            <person name="Parker A."/>
            <person name="Patel R."/>
            <person name="Pearce T.A.V."/>
            <person name="Peck A.I."/>
            <person name="Phillimore B.J.C.T."/>
            <person name="Prathalingam S.R."/>
            <person name="Plumb R.W."/>
            <person name="Ramsay H."/>
            <person name="Rice C.M."/>
            <person name="Ross M.T."/>
            <person name="Scott C.E."/>
            <person name="Sehra H.K."/>
            <person name="Shownkeen R."/>
            <person name="Sims S."/>
            <person name="Skuce C.D."/>
            <person name="Smith M.L."/>
            <person name="Soderlund C."/>
            <person name="Steward C.A."/>
            <person name="Sulston J.E."/>
            <person name="Swann R.M."/>
            <person name="Sycamore N."/>
            <person name="Taylor R."/>
            <person name="Tee L."/>
            <person name="Thomas D.W."/>
            <person name="Thorpe A."/>
            <person name="Tracey A."/>
            <person name="Tromans A.C."/>
            <person name="Vaudin M."/>
            <person name="Wall M."/>
            <person name="Wallis J.M."/>
            <person name="Whitehead S.L."/>
            <person name="Whittaker P."/>
            <person name="Willey D.L."/>
            <person name="Williams L."/>
            <person name="Williams S.A."/>
            <person name="Wilming L."/>
            <person name="Wray P.W."/>
            <person name="Hubbard T."/>
            <person name="Durbin R.M."/>
            <person name="Bentley D.R."/>
            <person name="Beck S."/>
            <person name="Rogers J."/>
        </authorList>
    </citation>
    <scope>NUCLEOTIDE SEQUENCE [LARGE SCALE GENOMIC DNA]</scope>
</reference>
<reference key="3">
    <citation type="submission" date="2005-09" db="EMBL/GenBank/DDBJ databases">
        <authorList>
            <person name="Mural R.J."/>
            <person name="Istrail S."/>
            <person name="Sutton G."/>
            <person name="Florea L."/>
            <person name="Halpern A.L."/>
            <person name="Mobarry C.M."/>
            <person name="Lippert R."/>
            <person name="Walenz B."/>
            <person name="Shatkay H."/>
            <person name="Dew I."/>
            <person name="Miller J.R."/>
            <person name="Flanigan M.J."/>
            <person name="Edwards N.J."/>
            <person name="Bolanos R."/>
            <person name="Fasulo D."/>
            <person name="Halldorsson B.V."/>
            <person name="Hannenhalli S."/>
            <person name="Turner R."/>
            <person name="Yooseph S."/>
            <person name="Lu F."/>
            <person name="Nusskern D.R."/>
            <person name="Shue B.C."/>
            <person name="Zheng X.H."/>
            <person name="Zhong F."/>
            <person name="Delcher A.L."/>
            <person name="Huson D.H."/>
            <person name="Kravitz S.A."/>
            <person name="Mouchard L."/>
            <person name="Reinert K."/>
            <person name="Remington K.A."/>
            <person name="Clark A.G."/>
            <person name="Waterman M.S."/>
            <person name="Eichler E.E."/>
            <person name="Adams M.D."/>
            <person name="Hunkapiller M.W."/>
            <person name="Myers E.W."/>
            <person name="Venter J.C."/>
        </authorList>
    </citation>
    <scope>NUCLEOTIDE SEQUENCE [LARGE SCALE GENOMIC DNA]</scope>
</reference>
<reference key="4">
    <citation type="journal article" date="2004" name="Genome Res.">
        <title>The status, quality, and expansion of the NIH full-length cDNA project: the Mammalian Gene Collection (MGC).</title>
        <authorList>
            <consortium name="The MGC Project Team"/>
        </authorList>
    </citation>
    <scope>NUCLEOTIDE SEQUENCE [LARGE SCALE MRNA] (ISOFORM SALL4A)</scope>
</reference>
<reference key="5">
    <citation type="journal article" date="2002" name="Hum. Mol. Genet.">
        <title>Okihiro syndrome is caused by SALL4 mutations.</title>
        <authorList>
            <person name="Kohlhase J."/>
            <person name="Heinrich M."/>
            <person name="Schubert L."/>
            <person name="Liebers M."/>
            <person name="Kispert A."/>
            <person name="Laccone F."/>
            <person name="Turnpenny P."/>
            <person name="Winter R.M."/>
            <person name="Reardon W."/>
        </authorList>
    </citation>
    <scope>INVOLVEMENT IN DRRS</scope>
</reference>
<reference key="6">
    <citation type="journal article" date="2006" name="Dev. Biol.">
        <title>The vertebrate spalt genes in development and disease.</title>
        <authorList>
            <person name="Sweetman D."/>
            <person name="Muensterberg A."/>
        </authorList>
    </citation>
    <scope>DOMAIN</scope>
</reference>
<reference key="7">
    <citation type="journal article" date="2008" name="Proc. Natl. Acad. Sci. U.S.A.">
        <title>A quantitative atlas of mitotic phosphorylation.</title>
        <authorList>
            <person name="Dephoure N."/>
            <person name="Zhou C."/>
            <person name="Villen J."/>
            <person name="Beausoleil S.A."/>
            <person name="Bakalarski C.E."/>
            <person name="Elledge S.J."/>
            <person name="Gygi S.P."/>
        </authorList>
    </citation>
    <scope>IDENTIFICATION BY MASS SPECTROMETRY [LARGE SCALE ANALYSIS]</scope>
    <source>
        <tissue>Cervix carcinoma</tissue>
    </source>
</reference>
<reference key="8">
    <citation type="journal article" date="2011" name="J. Cell Sci.">
        <title>A BEN-domain-containing protein associates with heterochromatin and represses transcription.</title>
        <authorList>
            <person name="Sathyan K.M."/>
            <person name="Shen Z."/>
            <person name="Tripathi V."/>
            <person name="Prasanth K.V."/>
            <person name="Prasanth S.G."/>
        </authorList>
    </citation>
    <scope>INTERACTION WITH BEND3</scope>
</reference>
<reference key="9">
    <citation type="journal article" date="2011" name="Sci. Signal.">
        <title>System-wide temporal characterization of the proteome and phosphoproteome of human embryonic stem cell differentiation.</title>
        <authorList>
            <person name="Rigbolt K.T."/>
            <person name="Prokhorova T.A."/>
            <person name="Akimov V."/>
            <person name="Henningsen J."/>
            <person name="Johansen P.T."/>
            <person name="Kratchmarova I."/>
            <person name="Kassem M."/>
            <person name="Mann M."/>
            <person name="Olsen J.V."/>
            <person name="Blagoev B."/>
        </authorList>
    </citation>
    <scope>PHOSPHORYLATION [LARGE SCALE ANALYSIS] AT SER-307; THR-541; SER-776; SER-789 AND SER-1019</scope>
    <scope>IDENTIFICATION BY MASS SPECTROMETRY [LARGE SCALE ANALYSIS]</scope>
</reference>
<reference key="10">
    <citation type="journal article" date="2012" name="EMBO J.">
        <title>Nuclear receptor binding protein 1 regulates intestinal progenitor cell homeostasis and tumour formation.</title>
        <authorList>
            <person name="Wilson C.H."/>
            <person name="Crombie C."/>
            <person name="van der Weyden L."/>
            <person name="Poulogiannis G."/>
            <person name="Rust A.G."/>
            <person name="Pardo M."/>
            <person name="Gracia T."/>
            <person name="Yu L."/>
            <person name="Choudhary J."/>
            <person name="Poulin G.B."/>
            <person name="McIntyre R.E."/>
            <person name="Winton D.J."/>
            <person name="March H.N."/>
            <person name="Arends M.J."/>
            <person name="Fraser A.G."/>
            <person name="Adams D.J."/>
        </authorList>
    </citation>
    <scope>INTERACTION WITH NRBP1</scope>
</reference>
<reference key="11">
    <citation type="journal article" date="2012" name="J. Biol. Chem.">
        <title>Sumoylation is important for stability, subcellular localization, and transcriptional activity of SALL4, an essential stem cell transcription factor.</title>
        <authorList>
            <person name="Yang F."/>
            <person name="Yao Y."/>
            <person name="Jiang Y."/>
            <person name="Lu L."/>
            <person name="Ma Y."/>
            <person name="Dai W."/>
        </authorList>
    </citation>
    <scope>FUNCTION</scope>
    <scope>UBIQUITINATION</scope>
    <scope>SUMOYLATION AT LYS-156; LYS-316; LYS-374 AND LYS-838</scope>
    <scope>PHOSPHORYLATION AT SER-57 AND SER-852</scope>
    <scope>INTERACTION WITH POU5F1</scope>
</reference>
<reference key="12">
    <citation type="journal article" date="2015" name="Cell Rep.">
        <title>SUMO-2 orchestrates chromatin modifiers in response to DNA damage.</title>
        <authorList>
            <person name="Hendriks I.A."/>
            <person name="Treffers L.W."/>
            <person name="Verlaan-de Vries M."/>
            <person name="Olsen J.V."/>
            <person name="Vertegaal A.C."/>
        </authorList>
    </citation>
    <scope>SUMOYLATION [LARGE SCALE ANALYSIS] AT LYS-316 AND LYS-838</scope>
    <scope>IDENTIFICATION BY MASS SPECTROMETRY [LARGE SCALE ANALYSIS]</scope>
</reference>
<reference key="13">
    <citation type="journal article" date="2017" name="Nat. Struct. Mol. Biol.">
        <title>Site-specific mapping of the human SUMO proteome reveals co-modification with phosphorylation.</title>
        <authorList>
            <person name="Hendriks I.A."/>
            <person name="Lyon D."/>
            <person name="Young C."/>
            <person name="Jensen L.J."/>
            <person name="Vertegaal A.C."/>
            <person name="Nielsen M.L."/>
        </authorList>
    </citation>
    <scope>SUMOYLATION [LARGE SCALE ANALYSIS] AT LYS-156; LYS-175; LYS-190; LYS-290; LYS-316; LYS-372; LYS-374; LYS-436; LYS-550; LYS-597; LYS-623; LYS-838; LYS-896; LYS-932 AND LYS-947</scope>
    <scope>IDENTIFICATION BY MASS SPECTROMETRY [LARGE SCALE ANALYSIS]</scope>
</reference>
<reference key="14">
    <citation type="journal article" date="2002" name="Am. J. Hum. Genet.">
        <title>Duane radial ray syndrome (Okihiro syndrome) maps to 20q13 and results from mutations in SALL4, a new member of the SAL family.</title>
        <authorList>
            <person name="Al-Baradie R."/>
            <person name="Yamada K."/>
            <person name="St Hilaire C."/>
            <person name="Chan W.-M."/>
            <person name="Andrews C."/>
            <person name="McIntosh N."/>
            <person name="Nakano M."/>
            <person name="Martonyi E.J."/>
            <person name="Raymond W.R."/>
            <person name="Okumura S."/>
            <person name="Okihiro M.M."/>
            <person name="Engle E.C."/>
        </authorList>
    </citation>
    <scope>VARIANTS ARG-507 AND LEU-798</scope>
    <scope>INVOLVEMENT IN DRRS</scope>
</reference>
<reference key="15">
    <citation type="journal article" date="2006" name="Hum. Genet.">
        <title>A SALL4 zinc finger missense mutation predicted to result in increased DNA binding affinity is associated with cranial midline defects and mild features of Okihiro syndrome.</title>
        <authorList>
            <person name="Miertus J."/>
            <person name="Borozdin W."/>
            <person name="Frecer V."/>
            <person name="Tonini G."/>
            <person name="Bertok S."/>
            <person name="Amoroso A."/>
            <person name="Miertus S."/>
            <person name="Kohlhase J."/>
        </authorList>
    </citation>
    <scope>VARIANT DRRS ARG-888</scope>
</reference>
<reference key="16">
    <citation type="journal article" date="2007" name="Am. J. Med. Genet. A">
        <title>IVIC syndrome is caused by a c.2607delA mutation in the SALL4 locus.</title>
        <authorList>
            <person name="Paradisi I."/>
            <person name="Arias S."/>
        </authorList>
    </citation>
    <scope>INVOLVEMENT IN IVIC</scope>
</reference>
<protein>
    <recommendedName>
        <fullName>Sal-like protein 4</fullName>
    </recommendedName>
    <alternativeName>
        <fullName>Zinc finger protein 797</fullName>
    </alternativeName>
    <alternativeName>
        <fullName>Zinc finger protein SALL4</fullName>
    </alternativeName>
</protein>
<evidence type="ECO:0000250" key="1">
    <source>
        <dbReference type="UniProtKB" id="Q8BX22"/>
    </source>
</evidence>
<evidence type="ECO:0000255" key="2">
    <source>
        <dbReference type="PROSITE-ProRule" id="PRU00042"/>
    </source>
</evidence>
<evidence type="ECO:0000256" key="3">
    <source>
        <dbReference type="SAM" id="MobiDB-lite"/>
    </source>
</evidence>
<evidence type="ECO:0000269" key="4">
    <source>
    </source>
</evidence>
<evidence type="ECO:0000269" key="5">
    <source>
    </source>
</evidence>
<evidence type="ECO:0000269" key="6">
    <source>
    </source>
</evidence>
<evidence type="ECO:0000269" key="7">
    <source>
    </source>
</evidence>
<evidence type="ECO:0000269" key="8">
    <source>
    </source>
</evidence>
<evidence type="ECO:0000269" key="9">
    <source>
    </source>
</evidence>
<evidence type="ECO:0000269" key="10">
    <source>
    </source>
</evidence>
<evidence type="ECO:0000269" key="11">
    <source>
    </source>
</evidence>
<evidence type="ECO:0000303" key="12">
    <source>
    </source>
</evidence>
<evidence type="ECO:0000303" key="13">
    <source>
    </source>
</evidence>
<evidence type="ECO:0000305" key="14"/>
<evidence type="ECO:0007744" key="15">
    <source>
    </source>
</evidence>
<evidence type="ECO:0007744" key="16">
    <source>
    </source>
</evidence>
<evidence type="ECO:0007744" key="17">
    <source>
    </source>
</evidence>
<evidence type="ECO:0007829" key="18">
    <source>
        <dbReference type="PDB" id="5XWR"/>
    </source>
</evidence>
<evidence type="ECO:0007829" key="19">
    <source>
        <dbReference type="PDB" id="7BQV"/>
    </source>
</evidence>
<evidence type="ECO:0007829" key="20">
    <source>
        <dbReference type="PDB" id="7Y3I"/>
    </source>
</evidence>
<evidence type="ECO:0007829" key="21">
    <source>
        <dbReference type="PDB" id="7Y3M"/>
    </source>
</evidence>
<evidence type="ECO:0007829" key="22">
    <source>
        <dbReference type="PDB" id="8CUC"/>
    </source>
</evidence>
<evidence type="ECO:0007829" key="23">
    <source>
        <dbReference type="PDB" id="8U16"/>
    </source>
</evidence>
<gene>
    <name type="primary">SALL4</name>
    <name type="synonym">ZNF797</name>
</gene>
<dbReference type="EMBL" id="AY172738">
    <property type="protein sequence ID" value="AAO44950.1"/>
    <property type="molecule type" value="mRNA"/>
</dbReference>
<dbReference type="EMBL" id="AY170621">
    <property type="protein sequence ID" value="AAO16566.1"/>
    <property type="molecule type" value="mRNA"/>
</dbReference>
<dbReference type="EMBL" id="AL034420">
    <property type="status" value="NOT_ANNOTATED_CDS"/>
    <property type="molecule type" value="Genomic_DNA"/>
</dbReference>
<dbReference type="EMBL" id="CH471077">
    <property type="protein sequence ID" value="EAW75595.1"/>
    <property type="molecule type" value="Genomic_DNA"/>
</dbReference>
<dbReference type="EMBL" id="BC111714">
    <property type="protein sequence ID" value="AAI11715.1"/>
    <property type="molecule type" value="mRNA"/>
</dbReference>
<dbReference type="CCDS" id="CCDS13438.1">
    <molecule id="Q9UJQ4-1"/>
</dbReference>
<dbReference type="CCDS" id="CCDS82629.1">
    <molecule id="Q9UJQ4-2"/>
</dbReference>
<dbReference type="RefSeq" id="NP_001304960.1">
    <molecule id="Q9UJQ4-2"/>
    <property type="nucleotide sequence ID" value="NM_001318031.2"/>
</dbReference>
<dbReference type="RefSeq" id="NP_065169.1">
    <molecule id="Q9UJQ4-1"/>
    <property type="nucleotide sequence ID" value="NM_020436.5"/>
</dbReference>
<dbReference type="PDB" id="5XWR">
    <property type="method" value="X-ray"/>
    <property type="resolution" value="2.69 A"/>
    <property type="chains" value="C/D=1-12"/>
</dbReference>
<dbReference type="PDB" id="6UML">
    <property type="method" value="X-ray"/>
    <property type="resolution" value="3.58 A"/>
    <property type="chains" value="E=405-432"/>
</dbReference>
<dbReference type="PDB" id="7BQU">
    <property type="method" value="X-ray"/>
    <property type="resolution" value="1.90 A"/>
    <property type="chains" value="B=410-432"/>
</dbReference>
<dbReference type="PDB" id="7BQV">
    <property type="method" value="X-ray"/>
    <property type="resolution" value="1.80 A"/>
    <property type="chains" value="B=410-432"/>
</dbReference>
<dbReference type="PDB" id="7Y3I">
    <property type="method" value="X-ray"/>
    <property type="resolution" value="2.45 A"/>
    <property type="chains" value="A/B/C/D=855-930"/>
</dbReference>
<dbReference type="PDB" id="7Y3K">
    <property type="method" value="X-ray"/>
    <property type="resolution" value="2.50 A"/>
    <property type="chains" value="A/B=855-930"/>
</dbReference>
<dbReference type="PDB" id="7Y3M">
    <property type="method" value="X-ray"/>
    <property type="resolution" value="2.72 A"/>
    <property type="chains" value="A/B/C/F/I/J=378-453"/>
</dbReference>
<dbReference type="PDB" id="8CUC">
    <property type="method" value="X-ray"/>
    <property type="resolution" value="2.09 A"/>
    <property type="chains" value="E/F/G/H=864-929"/>
</dbReference>
<dbReference type="PDB" id="8U15">
    <property type="method" value="X-ray"/>
    <property type="resolution" value="2.95 A"/>
    <property type="chains" value="C/F=379-432"/>
</dbReference>
<dbReference type="PDB" id="8U16">
    <property type="method" value="X-ray"/>
    <property type="resolution" value="2.90 A"/>
    <property type="chains" value="C/F=379-432"/>
</dbReference>
<dbReference type="PDB" id="8U17">
    <property type="method" value="X-ray"/>
    <property type="resolution" value="3.10 A"/>
    <property type="chains" value="C/F=370-454"/>
</dbReference>
<dbReference type="PDBsum" id="5XWR"/>
<dbReference type="PDBsum" id="6UML"/>
<dbReference type="PDBsum" id="7BQU"/>
<dbReference type="PDBsum" id="7BQV"/>
<dbReference type="PDBsum" id="7Y3I"/>
<dbReference type="PDBsum" id="7Y3K"/>
<dbReference type="PDBsum" id="7Y3M"/>
<dbReference type="PDBsum" id="8CUC"/>
<dbReference type="PDBsum" id="8U15"/>
<dbReference type="PDBsum" id="8U16"/>
<dbReference type="PDBsum" id="8U17"/>
<dbReference type="SMR" id="Q9UJQ4"/>
<dbReference type="BioGRID" id="121420">
    <property type="interactions" value="26"/>
</dbReference>
<dbReference type="FunCoup" id="Q9UJQ4">
    <property type="interactions" value="1976"/>
</dbReference>
<dbReference type="IntAct" id="Q9UJQ4">
    <property type="interactions" value="15"/>
</dbReference>
<dbReference type="MINT" id="Q9UJQ4"/>
<dbReference type="STRING" id="9606.ENSP00000217086"/>
<dbReference type="BindingDB" id="Q9UJQ4"/>
<dbReference type="GlyGen" id="Q9UJQ4">
    <property type="glycosylation" value="2 sites, 1 O-linked glycan (1 site)"/>
</dbReference>
<dbReference type="iPTMnet" id="Q9UJQ4"/>
<dbReference type="PhosphoSitePlus" id="Q9UJQ4"/>
<dbReference type="BioMuta" id="SALL4"/>
<dbReference type="DMDM" id="24212387"/>
<dbReference type="jPOST" id="Q9UJQ4"/>
<dbReference type="MassIVE" id="Q9UJQ4"/>
<dbReference type="PaxDb" id="9606-ENSP00000217086"/>
<dbReference type="PeptideAtlas" id="Q9UJQ4"/>
<dbReference type="ProteomicsDB" id="190"/>
<dbReference type="ProteomicsDB" id="84639">
    <molecule id="Q9UJQ4-1"/>
</dbReference>
<dbReference type="ABCD" id="Q9UJQ4">
    <property type="antibodies" value="1 sequenced antibody"/>
</dbReference>
<dbReference type="Antibodypedia" id="13868">
    <property type="antibodies" value="350 antibodies from 41 providers"/>
</dbReference>
<dbReference type="DNASU" id="57167"/>
<dbReference type="Ensembl" id="ENST00000217086.9">
    <molecule id="Q9UJQ4-1"/>
    <property type="protein sequence ID" value="ENSP00000217086.4"/>
    <property type="gene ID" value="ENSG00000101115.13"/>
</dbReference>
<dbReference type="Ensembl" id="ENST00000395997.3">
    <molecule id="Q9UJQ4-2"/>
    <property type="protein sequence ID" value="ENSP00000379319.3"/>
    <property type="gene ID" value="ENSG00000101115.13"/>
</dbReference>
<dbReference type="GeneID" id="57167"/>
<dbReference type="KEGG" id="hsa:57167"/>
<dbReference type="MANE-Select" id="ENST00000217086.9">
    <property type="protein sequence ID" value="ENSP00000217086.4"/>
    <property type="RefSeq nucleotide sequence ID" value="NM_020436.5"/>
    <property type="RefSeq protein sequence ID" value="NP_065169.1"/>
</dbReference>
<dbReference type="UCSC" id="uc002xwh.5">
    <molecule id="Q9UJQ4-1"/>
    <property type="organism name" value="human"/>
</dbReference>
<dbReference type="AGR" id="HGNC:15924"/>
<dbReference type="CTD" id="57167"/>
<dbReference type="DisGeNET" id="57167"/>
<dbReference type="GeneCards" id="SALL4"/>
<dbReference type="GeneReviews" id="SALL4"/>
<dbReference type="HGNC" id="HGNC:15924">
    <property type="gene designation" value="SALL4"/>
</dbReference>
<dbReference type="HPA" id="ENSG00000101115">
    <property type="expression patterns" value="Tissue enhanced (testis, thyroid gland)"/>
</dbReference>
<dbReference type="MalaCards" id="SALL4"/>
<dbReference type="MIM" id="147750">
    <property type="type" value="phenotype"/>
</dbReference>
<dbReference type="MIM" id="607323">
    <property type="type" value="phenotype"/>
</dbReference>
<dbReference type="MIM" id="607343">
    <property type="type" value="gene"/>
</dbReference>
<dbReference type="neXtProt" id="NX_Q9UJQ4"/>
<dbReference type="OpenTargets" id="ENSG00000101115"/>
<dbReference type="Orphanet" id="959">
    <property type="disease" value="Acro-renal-ocular syndrome"/>
</dbReference>
<dbReference type="Orphanet" id="233">
    <property type="disease" value="Duane retraction syndrome"/>
</dbReference>
<dbReference type="Orphanet" id="2307">
    <property type="disease" value="IVIC syndrome"/>
</dbReference>
<dbReference type="Orphanet" id="261638">
    <property type="disease" value="Okihiro syndrome due to 20q13 microdeletion"/>
</dbReference>
<dbReference type="Orphanet" id="261647">
    <property type="disease" value="Okihiro syndrome due to a point mutation"/>
</dbReference>
<dbReference type="PharmGKB" id="PA34936"/>
<dbReference type="VEuPathDB" id="HostDB:ENSG00000101115"/>
<dbReference type="eggNOG" id="KOG1074">
    <property type="taxonomic scope" value="Eukaryota"/>
</dbReference>
<dbReference type="GeneTree" id="ENSGT00940000155384"/>
<dbReference type="HOGENOM" id="CLU_005740_1_0_1"/>
<dbReference type="InParanoid" id="Q9UJQ4"/>
<dbReference type="OMA" id="SKPQHIN"/>
<dbReference type="OrthoDB" id="8749569at2759"/>
<dbReference type="PAN-GO" id="Q9UJQ4">
    <property type="GO annotations" value="4 GO annotations based on evolutionary models"/>
</dbReference>
<dbReference type="PhylomeDB" id="Q9UJQ4"/>
<dbReference type="TreeFam" id="TF317003"/>
<dbReference type="PathwayCommons" id="Q9UJQ4"/>
<dbReference type="Reactome" id="R-HSA-2892247">
    <property type="pathway name" value="POU5F1 (OCT4), SOX2, NANOG activate genes related to proliferation"/>
</dbReference>
<dbReference type="Reactome" id="R-HSA-452723">
    <property type="pathway name" value="Transcriptional regulation of pluripotent stem cells"/>
</dbReference>
<dbReference type="Reactome" id="R-HSA-8943724">
    <property type="pathway name" value="Regulation of PTEN gene transcription"/>
</dbReference>
<dbReference type="SignaLink" id="Q9UJQ4"/>
<dbReference type="SIGNOR" id="Q9UJQ4"/>
<dbReference type="BioGRID-ORCS" id="57167">
    <property type="hits" value="14 hits in 1169 CRISPR screens"/>
</dbReference>
<dbReference type="ChiTaRS" id="SALL4">
    <property type="organism name" value="human"/>
</dbReference>
<dbReference type="GeneWiki" id="SALL4"/>
<dbReference type="GenomeRNAi" id="57167"/>
<dbReference type="Pharos" id="Q9UJQ4">
    <property type="development level" value="Tbio"/>
</dbReference>
<dbReference type="PRO" id="PR:Q9UJQ4"/>
<dbReference type="Proteomes" id="UP000005640">
    <property type="component" value="Chromosome 20"/>
</dbReference>
<dbReference type="RNAct" id="Q9UJQ4">
    <property type="molecule type" value="protein"/>
</dbReference>
<dbReference type="Bgee" id="ENSG00000101115">
    <property type="expression patterns" value="Expressed in secondary oocyte and 106 other cell types or tissues"/>
</dbReference>
<dbReference type="ExpressionAtlas" id="Q9UJQ4">
    <property type="expression patterns" value="baseline and differential"/>
</dbReference>
<dbReference type="GO" id="GO:0005737">
    <property type="term" value="C:cytoplasm"/>
    <property type="evidence" value="ECO:0007669"/>
    <property type="project" value="UniProtKB-SubCell"/>
</dbReference>
<dbReference type="GO" id="GO:0000792">
    <property type="term" value="C:heterochromatin"/>
    <property type="evidence" value="ECO:0007669"/>
    <property type="project" value="Ensembl"/>
</dbReference>
<dbReference type="GO" id="GO:0043231">
    <property type="term" value="C:intracellular membrane-bounded organelle"/>
    <property type="evidence" value="ECO:0000314"/>
    <property type="project" value="HPA"/>
</dbReference>
<dbReference type="GO" id="GO:0005654">
    <property type="term" value="C:nucleoplasm"/>
    <property type="evidence" value="ECO:0000314"/>
    <property type="project" value="HPA"/>
</dbReference>
<dbReference type="GO" id="GO:0005634">
    <property type="term" value="C:nucleus"/>
    <property type="evidence" value="ECO:0000318"/>
    <property type="project" value="GO_Central"/>
</dbReference>
<dbReference type="GO" id="GO:0032991">
    <property type="term" value="C:protein-containing complex"/>
    <property type="evidence" value="ECO:0007669"/>
    <property type="project" value="Ensembl"/>
</dbReference>
<dbReference type="GO" id="GO:0003677">
    <property type="term" value="F:DNA binding"/>
    <property type="evidence" value="ECO:0007669"/>
    <property type="project" value="UniProtKB-KW"/>
</dbReference>
<dbReference type="GO" id="GO:0000981">
    <property type="term" value="F:DNA-binding transcription factor activity, RNA polymerase II-specific"/>
    <property type="evidence" value="ECO:0000318"/>
    <property type="project" value="GO_Central"/>
</dbReference>
<dbReference type="GO" id="GO:0008270">
    <property type="term" value="F:zinc ion binding"/>
    <property type="evidence" value="ECO:0007669"/>
    <property type="project" value="UniProtKB-KW"/>
</dbReference>
<dbReference type="GO" id="GO:0030326">
    <property type="term" value="P:embryonic limb morphogenesis"/>
    <property type="evidence" value="ECO:0007669"/>
    <property type="project" value="Ensembl"/>
</dbReference>
<dbReference type="GO" id="GO:0001833">
    <property type="term" value="P:inner cell mass cell proliferation"/>
    <property type="evidence" value="ECO:0007669"/>
    <property type="project" value="Ensembl"/>
</dbReference>
<dbReference type="GO" id="GO:0000122">
    <property type="term" value="P:negative regulation of transcription by RNA polymerase II"/>
    <property type="evidence" value="ECO:0007669"/>
    <property type="project" value="Ensembl"/>
</dbReference>
<dbReference type="GO" id="GO:0001843">
    <property type="term" value="P:neural tube closure"/>
    <property type="evidence" value="ECO:0007669"/>
    <property type="project" value="Ensembl"/>
</dbReference>
<dbReference type="GO" id="GO:0045944">
    <property type="term" value="P:positive regulation of transcription by RNA polymerase II"/>
    <property type="evidence" value="ECO:0007669"/>
    <property type="project" value="Ensembl"/>
</dbReference>
<dbReference type="GO" id="GO:0006357">
    <property type="term" value="P:regulation of transcription by RNA polymerase II"/>
    <property type="evidence" value="ECO:0000318"/>
    <property type="project" value="GO_Central"/>
</dbReference>
<dbReference type="GO" id="GO:0035019">
    <property type="term" value="P:somatic stem cell population maintenance"/>
    <property type="evidence" value="ECO:0007669"/>
    <property type="project" value="Ensembl"/>
</dbReference>
<dbReference type="GO" id="GO:0003281">
    <property type="term" value="P:ventricular septum development"/>
    <property type="evidence" value="ECO:0007669"/>
    <property type="project" value="Ensembl"/>
</dbReference>
<dbReference type="FunFam" id="3.30.160.60:FF:001874">
    <property type="entry name" value="sal-like protein 4 isoform X2"/>
    <property type="match status" value="1"/>
</dbReference>
<dbReference type="FunFam" id="3.30.160.60:FF:000689">
    <property type="entry name" value="Spalt like transcription factor 1"/>
    <property type="match status" value="1"/>
</dbReference>
<dbReference type="FunFam" id="3.30.160.60:FF:000989">
    <property type="entry name" value="Spalt like transcription factor 4"/>
    <property type="match status" value="1"/>
</dbReference>
<dbReference type="FunFam" id="3.30.160.60:FF:001241">
    <property type="entry name" value="Spalt like transcription factor 4"/>
    <property type="match status" value="1"/>
</dbReference>
<dbReference type="FunFam" id="3.30.160.60:FF:000025">
    <property type="entry name" value="Spalt-like transcription factor 1"/>
    <property type="match status" value="1"/>
</dbReference>
<dbReference type="FunFam" id="3.30.160.60:FF:000130">
    <property type="entry name" value="Spalt-like transcription factor 4"/>
    <property type="match status" value="1"/>
</dbReference>
<dbReference type="Gene3D" id="3.30.160.60">
    <property type="entry name" value="Classic Zinc Finger"/>
    <property type="match status" value="6"/>
</dbReference>
<dbReference type="InterPro" id="IPR051565">
    <property type="entry name" value="Sal_C2H2-zinc-finger"/>
</dbReference>
<dbReference type="InterPro" id="IPR036236">
    <property type="entry name" value="Znf_C2H2_sf"/>
</dbReference>
<dbReference type="InterPro" id="IPR013087">
    <property type="entry name" value="Znf_C2H2_type"/>
</dbReference>
<dbReference type="PANTHER" id="PTHR23233">
    <property type="entry name" value="SAL-LIKE PROTEIN"/>
    <property type="match status" value="1"/>
</dbReference>
<dbReference type="PANTHER" id="PTHR23233:SF19">
    <property type="entry name" value="SAL-LIKE PROTEIN 4"/>
    <property type="match status" value="1"/>
</dbReference>
<dbReference type="Pfam" id="PF00096">
    <property type="entry name" value="zf-C2H2"/>
    <property type="match status" value="6"/>
</dbReference>
<dbReference type="SMART" id="SM00355">
    <property type="entry name" value="ZnF_C2H2"/>
    <property type="match status" value="8"/>
</dbReference>
<dbReference type="SUPFAM" id="SSF57667">
    <property type="entry name" value="beta-beta-alpha zinc fingers"/>
    <property type="match status" value="4"/>
</dbReference>
<dbReference type="PROSITE" id="PS00028">
    <property type="entry name" value="ZINC_FINGER_C2H2_1"/>
    <property type="match status" value="7"/>
</dbReference>
<dbReference type="PROSITE" id="PS50157">
    <property type="entry name" value="ZINC_FINGER_C2H2_2"/>
    <property type="match status" value="7"/>
</dbReference>
<name>SALL4_HUMAN</name>